<protein>
    <recommendedName>
        <fullName>Capsid protein</fullName>
        <shortName>CP</shortName>
    </recommendedName>
    <alternativeName>
        <fullName>Coat protein</fullName>
    </alternativeName>
</protein>
<sequence length="172" mass="19066">MASKWNWSGTKGRRTPRRPYGRPYKSSVPTTRVVVHQSAVLKKDEVVGTEIKPEGDVARYKMKKVMLTCTLRMAPGELVNYLIVKCNSPISSWSAAFTSPALLVKESCQDMITIIAKGKVESNGVAGTDCTKSFNRFIKLGAGITQTQHLYVVLYTSVALKAVLEHRVYVEV</sequence>
<feature type="chain" id="PRO_0000222433" description="Capsid protein">
    <location>
        <begin position="1"/>
        <end position="172"/>
    </location>
</feature>
<feature type="region of interest" description="Disordered" evidence="1">
    <location>
        <begin position="1"/>
        <end position="26"/>
    </location>
</feature>
<feature type="compositionally biased region" description="Basic residues" evidence="1">
    <location>
        <begin position="11"/>
        <end position="20"/>
    </location>
</feature>
<comment type="subcellular location">
    <subcellularLocation>
        <location evidence="2">Virion</location>
    </subcellularLocation>
</comment>
<comment type="similarity">
    <text evidence="2">Belongs to the nanoviridae capsid protein family.</text>
</comment>
<keyword id="KW-0167">Capsid protein</keyword>
<keyword id="KW-1185">Reference proteome</keyword>
<keyword id="KW-1140">T=1 icosahedral capsid protein</keyword>
<keyword id="KW-0946">Virion</keyword>
<organism>
    <name type="scientific">Faba bean necrotic yellows virus (isolate Egyptian EV1-93)</name>
    <name type="common">FBNYV</name>
    <dbReference type="NCBI Taxonomy" id="291603"/>
    <lineage>
        <taxon>Viruses</taxon>
        <taxon>Monodnaviria</taxon>
        <taxon>Shotokuvirae</taxon>
        <taxon>Cressdnaviricota</taxon>
        <taxon>Arfiviricetes</taxon>
        <taxon>Mulpavirales</taxon>
        <taxon>Nanoviridae</taxon>
        <taxon>Nanovirus</taxon>
        <taxon>Faba bean necrotic yellows virus</taxon>
    </lineage>
</organism>
<evidence type="ECO:0000256" key="1">
    <source>
        <dbReference type="SAM" id="MobiDB-lite"/>
    </source>
</evidence>
<evidence type="ECO:0000305" key="2"/>
<accession>Q9WIJ8</accession>
<gene>
    <name type="primary">DNA-S</name>
    <name type="synonym">C5</name>
</gene>
<name>CAPSD_FBNY1</name>
<reference key="1">
    <citation type="journal article" date="1998" name="J. Gen. Virol.">
        <title>Ten distinct circular ssDNA components, four of which encode putative replication-associated proteins, are associated with the faba bean necrotic yellows virus genome.</title>
        <authorList>
            <person name="Katul L."/>
            <person name="Timchenko T."/>
            <person name="Gronenborn B."/>
            <person name="Vetten H.J."/>
        </authorList>
    </citation>
    <scope>NUCLEOTIDE SEQUENCE [GENOMIC DNA]</scope>
</reference>
<proteinExistence type="inferred from homology"/>
<dbReference type="EMBL" id="AJ132183">
    <property type="protein sequence ID" value="CAB44023.1"/>
    <property type="molecule type" value="Genomic_DNA"/>
</dbReference>
<dbReference type="SMR" id="Q9WIJ8"/>
<dbReference type="KEGG" id="vg:993376"/>
<dbReference type="Proteomes" id="UP001508024">
    <property type="component" value="Genome"/>
</dbReference>
<dbReference type="GO" id="GO:0039615">
    <property type="term" value="C:T=1 icosahedral viral capsid"/>
    <property type="evidence" value="ECO:0007669"/>
    <property type="project" value="UniProtKB-KW"/>
</dbReference>
<dbReference type="InterPro" id="IPR006753">
    <property type="entry name" value="Nanovirus_coat"/>
</dbReference>
<dbReference type="Pfam" id="PF04660">
    <property type="entry name" value="Nanovirus_coat"/>
    <property type="match status" value="1"/>
</dbReference>
<organismHost>
    <name type="scientific">Cicer arietinum</name>
    <name type="common">Chickpea</name>
    <name type="synonym">Garbanzo</name>
    <dbReference type="NCBI Taxonomy" id="3827"/>
</organismHost>
<organismHost>
    <name type="scientific">Lens culinaris</name>
    <name type="common">Lentil</name>
    <name type="synonym">Cicer lens</name>
    <dbReference type="NCBI Taxonomy" id="3864"/>
</organismHost>
<organismHost>
    <name type="scientific">Phaseolus vulgaris</name>
    <name type="common">Kidney bean</name>
    <name type="synonym">French bean</name>
    <dbReference type="NCBI Taxonomy" id="3885"/>
</organismHost>
<organismHost>
    <name type="scientific">Vicia faba</name>
    <name type="common">Broad bean</name>
    <name type="synonym">Faba vulgaris</name>
    <dbReference type="NCBI Taxonomy" id="3906"/>
</organismHost>